<reference key="1">
    <citation type="submission" date="1997-04" db="EMBL/GenBank/DDBJ databases">
        <title>Characterization of the sks1 multidrug resistance gene homolog in Dictyostelium discoideum.</title>
        <authorList>
            <person name="De Maria A.C."/>
            <person name="Gomes S.L."/>
        </authorList>
    </citation>
    <scope>NUCLEOTIDE SEQUENCE [GENOMIC DNA]</scope>
</reference>
<reference key="2">
    <citation type="journal article" date="2002" name="Nature">
        <title>Sequence and analysis of chromosome 2 of Dictyostelium discoideum.</title>
        <authorList>
            <person name="Gloeckner G."/>
            <person name="Eichinger L."/>
            <person name="Szafranski K."/>
            <person name="Pachebat J.A."/>
            <person name="Bankier A.T."/>
            <person name="Dear P.H."/>
            <person name="Lehmann R."/>
            <person name="Baumgart C."/>
            <person name="Parra G."/>
            <person name="Abril J.F."/>
            <person name="Guigo R."/>
            <person name="Kumpf K."/>
            <person name="Tunggal B."/>
            <person name="Cox E.C."/>
            <person name="Quail M.A."/>
            <person name="Platzer M."/>
            <person name="Rosenthal A."/>
            <person name="Noegel A.A."/>
        </authorList>
    </citation>
    <scope>NUCLEOTIDE SEQUENCE [LARGE SCALE GENOMIC DNA]</scope>
    <source>
        <strain>AX4</strain>
    </source>
</reference>
<reference key="3">
    <citation type="journal article" date="2005" name="Nature">
        <title>The genome of the social amoeba Dictyostelium discoideum.</title>
        <authorList>
            <person name="Eichinger L."/>
            <person name="Pachebat J.A."/>
            <person name="Gloeckner G."/>
            <person name="Rajandream M.A."/>
            <person name="Sucgang R."/>
            <person name="Berriman M."/>
            <person name="Song J."/>
            <person name="Olsen R."/>
            <person name="Szafranski K."/>
            <person name="Xu Q."/>
            <person name="Tunggal B."/>
            <person name="Kummerfeld S."/>
            <person name="Madera M."/>
            <person name="Konfortov B.A."/>
            <person name="Rivero F."/>
            <person name="Bankier A.T."/>
            <person name="Lehmann R."/>
            <person name="Hamlin N."/>
            <person name="Davies R."/>
            <person name="Gaudet P."/>
            <person name="Fey P."/>
            <person name="Pilcher K."/>
            <person name="Chen G."/>
            <person name="Saunders D."/>
            <person name="Sodergren E.J."/>
            <person name="Davis P."/>
            <person name="Kerhornou A."/>
            <person name="Nie X."/>
            <person name="Hall N."/>
            <person name="Anjard C."/>
            <person name="Hemphill L."/>
            <person name="Bason N."/>
            <person name="Farbrother P."/>
            <person name="Desany B."/>
            <person name="Just E."/>
            <person name="Morio T."/>
            <person name="Rost R."/>
            <person name="Churcher C.M."/>
            <person name="Cooper J."/>
            <person name="Haydock S."/>
            <person name="van Driessche N."/>
            <person name="Cronin A."/>
            <person name="Goodhead I."/>
            <person name="Muzny D.M."/>
            <person name="Mourier T."/>
            <person name="Pain A."/>
            <person name="Lu M."/>
            <person name="Harper D."/>
            <person name="Lindsay R."/>
            <person name="Hauser H."/>
            <person name="James K.D."/>
            <person name="Quiles M."/>
            <person name="Madan Babu M."/>
            <person name="Saito T."/>
            <person name="Buchrieser C."/>
            <person name="Wardroper A."/>
            <person name="Felder M."/>
            <person name="Thangavelu M."/>
            <person name="Johnson D."/>
            <person name="Knights A."/>
            <person name="Loulseged H."/>
            <person name="Mungall K.L."/>
            <person name="Oliver K."/>
            <person name="Price C."/>
            <person name="Quail M.A."/>
            <person name="Urushihara H."/>
            <person name="Hernandez J."/>
            <person name="Rabbinowitsch E."/>
            <person name="Steffen D."/>
            <person name="Sanders M."/>
            <person name="Ma J."/>
            <person name="Kohara Y."/>
            <person name="Sharp S."/>
            <person name="Simmonds M.N."/>
            <person name="Spiegler S."/>
            <person name="Tivey A."/>
            <person name="Sugano S."/>
            <person name="White B."/>
            <person name="Walker D."/>
            <person name="Woodward J.R."/>
            <person name="Winckler T."/>
            <person name="Tanaka Y."/>
            <person name="Shaulsky G."/>
            <person name="Schleicher M."/>
            <person name="Weinstock G.M."/>
            <person name="Rosenthal A."/>
            <person name="Cox E.C."/>
            <person name="Chisholm R.L."/>
            <person name="Gibbs R.A."/>
            <person name="Loomis W.F."/>
            <person name="Platzer M."/>
            <person name="Kay R.R."/>
            <person name="Williams J.G."/>
            <person name="Dear P.H."/>
            <person name="Noegel A.A."/>
            <person name="Barrell B.G."/>
            <person name="Kuspa A."/>
        </authorList>
    </citation>
    <scope>NUCLEOTIDE SEQUENCE [LARGE SCALE GENOMIC DNA]</scope>
    <source>
        <strain>AX4</strain>
    </source>
</reference>
<name>PSDE_DICDI</name>
<organism>
    <name type="scientific">Dictyostelium discoideum</name>
    <name type="common">Social amoeba</name>
    <dbReference type="NCBI Taxonomy" id="44689"/>
    <lineage>
        <taxon>Eukaryota</taxon>
        <taxon>Amoebozoa</taxon>
        <taxon>Evosea</taxon>
        <taxon>Eumycetozoa</taxon>
        <taxon>Dictyostelia</taxon>
        <taxon>Dictyosteliales</taxon>
        <taxon>Dictyosteliaceae</taxon>
        <taxon>Dictyostelium</taxon>
    </lineage>
</organism>
<feature type="chain" id="PRO_0000315595" description="26S proteasome non-ATPase regulatory subunit 14">
    <location>
        <begin position="1"/>
        <end position="306"/>
    </location>
</feature>
<feature type="domain" description="MPN" evidence="2">
    <location>
        <begin position="31"/>
        <end position="166"/>
    </location>
</feature>
<feature type="short sequence motif" description="JAMM motif" evidence="2">
    <location>
        <begin position="113"/>
        <end position="126"/>
    </location>
</feature>
<feature type="binding site" evidence="2">
    <location>
        <position position="113"/>
    </location>
    <ligand>
        <name>Zn(2+)</name>
        <dbReference type="ChEBI" id="CHEBI:29105"/>
        <note>catalytic</note>
    </ligand>
</feature>
<feature type="binding site" evidence="2">
    <location>
        <position position="115"/>
    </location>
    <ligand>
        <name>Zn(2+)</name>
        <dbReference type="ChEBI" id="CHEBI:29105"/>
        <note>catalytic</note>
    </ligand>
</feature>
<feature type="binding site" evidence="2">
    <location>
        <position position="126"/>
    </location>
    <ligand>
        <name>Zn(2+)</name>
        <dbReference type="ChEBI" id="CHEBI:29105"/>
        <note>catalytic</note>
    </ligand>
</feature>
<feature type="sequence conflict" description="In Ref. 1; AAB57823." evidence="3" ref="1">
    <original>LN</original>
    <variation>SI</variation>
    <location>
        <begin position="193"/>
        <end position="194"/>
    </location>
</feature>
<sequence length="306" mass="34451">MNRSLMSLLGREGLGEKITDATPLPDTAETIHISSLALLKMLQHARAGVPLEVMGLMLGELIDEYTIRVIDVFAMPQSGTSVSVEAIDPVFQTKMLDMLKQTGRDEIVIGWYHSHPGFGCWLSSVDVNTQQSFEQLQSRAVAVVVDPLQSVRGKVVIDAFRTIKTSPTAEPRQITSNLGHLQDPSIQALIHGLNRNYYSIAINYRKNELEQKMLLNLHKKKWTEGLIVDKFDTHEQSNEKQINNLLELTKQYQKSIQDEDKIEPEKKEVSAVGKLDPKRHLISDVHTLMANNVVRVLTVMLDTVTF</sequence>
<evidence type="ECO:0000250" key="1"/>
<evidence type="ECO:0000255" key="2">
    <source>
        <dbReference type="PROSITE-ProRule" id="PRU01182"/>
    </source>
</evidence>
<evidence type="ECO:0000305" key="3"/>
<accession>Q86IJ1</accession>
<accession>O00850</accession>
<accession>Q559F3</accession>
<keyword id="KW-0378">Hydrolase</keyword>
<keyword id="KW-0479">Metal-binding</keyword>
<keyword id="KW-0482">Metalloprotease</keyword>
<keyword id="KW-0645">Protease</keyword>
<keyword id="KW-0647">Proteasome</keyword>
<keyword id="KW-1185">Reference proteome</keyword>
<keyword id="KW-0833">Ubl conjugation pathway</keyword>
<keyword id="KW-0862">Zinc</keyword>
<gene>
    <name type="primary">psmD14</name>
    <name type="synonym">sks1</name>
    <name type="ORF">DDB_G0272566</name>
</gene>
<proteinExistence type="inferred from homology"/>
<dbReference type="EC" id="3.4.19.-"/>
<dbReference type="EMBL" id="U96916">
    <property type="protein sequence ID" value="AAB57823.1"/>
    <property type="molecule type" value="Genomic_DNA"/>
</dbReference>
<dbReference type="EMBL" id="AAFI02000008">
    <property type="protein sequence ID" value="EAL70920.1"/>
    <property type="molecule type" value="Genomic_DNA"/>
</dbReference>
<dbReference type="RefSeq" id="XP_644863.1">
    <property type="nucleotide sequence ID" value="XM_639771.1"/>
</dbReference>
<dbReference type="SMR" id="Q86IJ1"/>
<dbReference type="FunCoup" id="Q86IJ1">
    <property type="interactions" value="1091"/>
</dbReference>
<dbReference type="STRING" id="44689.Q86IJ1"/>
<dbReference type="MEROPS" id="M67.001"/>
<dbReference type="PaxDb" id="44689-DDB0191298"/>
<dbReference type="EnsemblProtists" id="EAL70920">
    <property type="protein sequence ID" value="EAL70920"/>
    <property type="gene ID" value="DDB_G0272566"/>
</dbReference>
<dbReference type="GeneID" id="8618542"/>
<dbReference type="KEGG" id="ddi:DDB_G0272566"/>
<dbReference type="dictyBase" id="DDB_G0272566">
    <property type="gene designation" value="psmD14"/>
</dbReference>
<dbReference type="VEuPathDB" id="AmoebaDB:DDB_G0272566"/>
<dbReference type="eggNOG" id="KOG1555">
    <property type="taxonomic scope" value="Eukaryota"/>
</dbReference>
<dbReference type="HOGENOM" id="CLU_052991_0_1_1"/>
<dbReference type="InParanoid" id="Q86IJ1"/>
<dbReference type="OMA" id="KTGRHEM"/>
<dbReference type="PhylomeDB" id="Q86IJ1"/>
<dbReference type="Reactome" id="R-DDI-1236978">
    <property type="pathway name" value="Cross-presentation of soluble exogenous antigens (endosomes)"/>
</dbReference>
<dbReference type="Reactome" id="R-DDI-174084">
    <property type="pathway name" value="Autodegradation of Cdh1 by Cdh1:APC/C"/>
</dbReference>
<dbReference type="Reactome" id="R-DDI-174154">
    <property type="pathway name" value="APC/C:Cdc20 mediated degradation of Securin"/>
</dbReference>
<dbReference type="Reactome" id="R-DDI-174178">
    <property type="pathway name" value="APC/C:Cdh1 mediated degradation of Cdc20 and other APC/C:Cdh1 targeted proteins in late mitosis/early G1"/>
</dbReference>
<dbReference type="Reactome" id="R-DDI-2467813">
    <property type="pathway name" value="Separation of Sister Chromatids"/>
</dbReference>
<dbReference type="Reactome" id="R-DDI-349425">
    <property type="pathway name" value="Autodegradation of the E3 ubiquitin ligase COP1"/>
</dbReference>
<dbReference type="Reactome" id="R-DDI-382556">
    <property type="pathway name" value="ABC-family proteins mediated transport"/>
</dbReference>
<dbReference type="Reactome" id="R-DDI-450408">
    <property type="pathway name" value="AUF1 (hnRNP D0) binds and destabilizes mRNA"/>
</dbReference>
<dbReference type="Reactome" id="R-DDI-4641258">
    <property type="pathway name" value="Degradation of DVL"/>
</dbReference>
<dbReference type="Reactome" id="R-DDI-5632684">
    <property type="pathway name" value="Hedgehog 'on' state"/>
</dbReference>
<dbReference type="Reactome" id="R-DDI-5658442">
    <property type="pathway name" value="Regulation of RAS by GAPs"/>
</dbReference>
<dbReference type="Reactome" id="R-DDI-5687128">
    <property type="pathway name" value="MAPK6/MAPK4 signaling"/>
</dbReference>
<dbReference type="Reactome" id="R-DDI-5689603">
    <property type="pathway name" value="UCH proteinases"/>
</dbReference>
<dbReference type="Reactome" id="R-DDI-5689880">
    <property type="pathway name" value="Ub-specific processing proteases"/>
</dbReference>
<dbReference type="Reactome" id="R-DDI-5689901">
    <property type="pathway name" value="Metalloprotease DUBs"/>
</dbReference>
<dbReference type="Reactome" id="R-DDI-6798695">
    <property type="pathway name" value="Neutrophil degranulation"/>
</dbReference>
<dbReference type="Reactome" id="R-DDI-68949">
    <property type="pathway name" value="Orc1 removal from chromatin"/>
</dbReference>
<dbReference type="Reactome" id="R-DDI-69017">
    <property type="pathway name" value="CDK-mediated phosphorylation and removal of Cdc6"/>
</dbReference>
<dbReference type="Reactome" id="R-DDI-69601">
    <property type="pathway name" value="Ubiquitin Mediated Degradation of Phosphorylated Cdc25A"/>
</dbReference>
<dbReference type="Reactome" id="R-DDI-8854050">
    <property type="pathway name" value="FBXL7 down-regulates AURKA during mitotic entry and in early mitosis"/>
</dbReference>
<dbReference type="Reactome" id="R-DDI-8948751">
    <property type="pathway name" value="Regulation of PTEN stability and activity"/>
</dbReference>
<dbReference type="Reactome" id="R-DDI-8951664">
    <property type="pathway name" value="Neddylation"/>
</dbReference>
<dbReference type="Reactome" id="R-DDI-9755511">
    <property type="pathway name" value="KEAP1-NFE2L2 pathway"/>
</dbReference>
<dbReference type="Reactome" id="R-DDI-983168">
    <property type="pathway name" value="Antigen processing: Ubiquitination &amp; Proteasome degradation"/>
</dbReference>
<dbReference type="Reactome" id="R-DDI-9907900">
    <property type="pathway name" value="Proteasome assembly"/>
</dbReference>
<dbReference type="PRO" id="PR:Q86IJ1"/>
<dbReference type="Proteomes" id="UP000002195">
    <property type="component" value="Chromosome 2"/>
</dbReference>
<dbReference type="GO" id="GO:0005634">
    <property type="term" value="C:nucleus"/>
    <property type="evidence" value="ECO:0000318"/>
    <property type="project" value="GO_Central"/>
</dbReference>
<dbReference type="GO" id="GO:0045335">
    <property type="term" value="C:phagocytic vesicle"/>
    <property type="evidence" value="ECO:0007005"/>
    <property type="project" value="dictyBase"/>
</dbReference>
<dbReference type="GO" id="GO:0000502">
    <property type="term" value="C:proteasome complex"/>
    <property type="evidence" value="ECO:0000250"/>
    <property type="project" value="dictyBase"/>
</dbReference>
<dbReference type="GO" id="GO:0008541">
    <property type="term" value="C:proteasome regulatory particle, lid subcomplex"/>
    <property type="evidence" value="ECO:0000318"/>
    <property type="project" value="GO_Central"/>
</dbReference>
<dbReference type="GO" id="GO:0046872">
    <property type="term" value="F:metal ion binding"/>
    <property type="evidence" value="ECO:0007669"/>
    <property type="project" value="UniProtKB-KW"/>
</dbReference>
<dbReference type="GO" id="GO:0140492">
    <property type="term" value="F:metal-dependent deubiquitinase activity"/>
    <property type="evidence" value="ECO:0000318"/>
    <property type="project" value="GO_Central"/>
</dbReference>
<dbReference type="GO" id="GO:0070628">
    <property type="term" value="F:proteasome binding"/>
    <property type="evidence" value="ECO:0000318"/>
    <property type="project" value="GO_Central"/>
</dbReference>
<dbReference type="GO" id="GO:0043161">
    <property type="term" value="P:proteasome-mediated ubiquitin-dependent protein catabolic process"/>
    <property type="evidence" value="ECO:0000318"/>
    <property type="project" value="GO_Central"/>
</dbReference>
<dbReference type="CDD" id="cd08069">
    <property type="entry name" value="MPN_RPN11_CSN5"/>
    <property type="match status" value="1"/>
</dbReference>
<dbReference type="FunFam" id="3.40.140.10:FF:000026">
    <property type="entry name" value="26S proteasome non-ATPase regulatory subunit 14"/>
    <property type="match status" value="1"/>
</dbReference>
<dbReference type="Gene3D" id="3.40.140.10">
    <property type="entry name" value="Cytidine Deaminase, domain 2"/>
    <property type="match status" value="1"/>
</dbReference>
<dbReference type="InterPro" id="IPR000555">
    <property type="entry name" value="JAMM/MPN+_dom"/>
</dbReference>
<dbReference type="InterPro" id="IPR050242">
    <property type="entry name" value="JAMM_MPN+_peptidase_M67A"/>
</dbReference>
<dbReference type="InterPro" id="IPR037518">
    <property type="entry name" value="MPN"/>
</dbReference>
<dbReference type="InterPro" id="IPR056263">
    <property type="entry name" value="RPN11_C"/>
</dbReference>
<dbReference type="PANTHER" id="PTHR10410">
    <property type="entry name" value="EUKARYOTIC TRANSLATION INITIATION FACTOR 3 -RELATED"/>
    <property type="match status" value="1"/>
</dbReference>
<dbReference type="Pfam" id="PF01398">
    <property type="entry name" value="JAB"/>
    <property type="match status" value="1"/>
</dbReference>
<dbReference type="Pfam" id="PF23594">
    <property type="entry name" value="RPN11_C"/>
    <property type="match status" value="1"/>
</dbReference>
<dbReference type="SMART" id="SM00232">
    <property type="entry name" value="JAB_MPN"/>
    <property type="match status" value="1"/>
</dbReference>
<dbReference type="SUPFAM" id="SSF102712">
    <property type="entry name" value="JAB1/MPN domain"/>
    <property type="match status" value="1"/>
</dbReference>
<dbReference type="PROSITE" id="PS50249">
    <property type="entry name" value="MPN"/>
    <property type="match status" value="1"/>
</dbReference>
<protein>
    <recommendedName>
        <fullName>26S proteasome non-ATPase regulatory subunit 14</fullName>
        <ecNumber>3.4.19.-</ecNumber>
    </recommendedName>
    <alternativeName>
        <fullName>26S proteasome regulatory subunit RPN11</fullName>
    </alternativeName>
    <alternativeName>
        <fullName>Sks1 multidrug resistance protein homolog</fullName>
    </alternativeName>
</protein>
<comment type="function">
    <text evidence="1">Metalloprotease component of the 26S proteasome that specifically cleaves 'Lys-63'-linked polyubiquitin chains. The 26S proteasome is involved in the ATP-dependent degradation of ubiquitinated proteins. The function of the 'Lys-63'-specific deubiquitination of the proteasome is unclear (By similarity).</text>
</comment>
<comment type="subunit">
    <text evidence="1">Component of the 19S regulatory cap of the 26S proteasome.</text>
</comment>
<comment type="similarity">
    <text evidence="3">Belongs to the peptidase M67A family. PSMD14 subfamily.</text>
</comment>